<accession>Q6PIY7</accession>
<accession>Q86WZ2</accession>
<accession>Q8N927</accession>
<reference key="1">
    <citation type="journal article" date="2004" name="Nat. Genet.">
        <title>Complete sequencing and characterization of 21,243 full-length human cDNAs.</title>
        <authorList>
            <person name="Ota T."/>
            <person name="Suzuki Y."/>
            <person name="Nishikawa T."/>
            <person name="Otsuki T."/>
            <person name="Sugiyama T."/>
            <person name="Irie R."/>
            <person name="Wakamatsu A."/>
            <person name="Hayashi K."/>
            <person name="Sato H."/>
            <person name="Nagai K."/>
            <person name="Kimura K."/>
            <person name="Makita H."/>
            <person name="Sekine M."/>
            <person name="Obayashi M."/>
            <person name="Nishi T."/>
            <person name="Shibahara T."/>
            <person name="Tanaka T."/>
            <person name="Ishii S."/>
            <person name="Yamamoto J."/>
            <person name="Saito K."/>
            <person name="Kawai Y."/>
            <person name="Isono Y."/>
            <person name="Nakamura Y."/>
            <person name="Nagahari K."/>
            <person name="Murakami K."/>
            <person name="Yasuda T."/>
            <person name="Iwayanagi T."/>
            <person name="Wagatsuma M."/>
            <person name="Shiratori A."/>
            <person name="Sudo H."/>
            <person name="Hosoiri T."/>
            <person name="Kaku Y."/>
            <person name="Kodaira H."/>
            <person name="Kondo H."/>
            <person name="Sugawara M."/>
            <person name="Takahashi M."/>
            <person name="Kanda K."/>
            <person name="Yokoi T."/>
            <person name="Furuya T."/>
            <person name="Kikkawa E."/>
            <person name="Omura Y."/>
            <person name="Abe K."/>
            <person name="Kamihara K."/>
            <person name="Katsuta N."/>
            <person name="Sato K."/>
            <person name="Tanikawa M."/>
            <person name="Yamazaki M."/>
            <person name="Ninomiya K."/>
            <person name="Ishibashi T."/>
            <person name="Yamashita H."/>
            <person name="Murakawa K."/>
            <person name="Fujimori K."/>
            <person name="Tanai H."/>
            <person name="Kimata M."/>
            <person name="Watanabe M."/>
            <person name="Hiraoka S."/>
            <person name="Chiba Y."/>
            <person name="Ishida S."/>
            <person name="Ono Y."/>
            <person name="Takiguchi S."/>
            <person name="Watanabe S."/>
            <person name="Yosida M."/>
            <person name="Hotuta T."/>
            <person name="Kusano J."/>
            <person name="Kanehori K."/>
            <person name="Takahashi-Fujii A."/>
            <person name="Hara H."/>
            <person name="Tanase T.-O."/>
            <person name="Nomura Y."/>
            <person name="Togiya S."/>
            <person name="Komai F."/>
            <person name="Hara R."/>
            <person name="Takeuchi K."/>
            <person name="Arita M."/>
            <person name="Imose N."/>
            <person name="Musashino K."/>
            <person name="Yuuki H."/>
            <person name="Oshima A."/>
            <person name="Sasaki N."/>
            <person name="Aotsuka S."/>
            <person name="Yoshikawa Y."/>
            <person name="Matsunawa H."/>
            <person name="Ichihara T."/>
            <person name="Shiohata N."/>
            <person name="Sano S."/>
            <person name="Moriya S."/>
            <person name="Momiyama H."/>
            <person name="Satoh N."/>
            <person name="Takami S."/>
            <person name="Terashima Y."/>
            <person name="Suzuki O."/>
            <person name="Nakagawa S."/>
            <person name="Senoh A."/>
            <person name="Mizoguchi H."/>
            <person name="Goto Y."/>
            <person name="Shimizu F."/>
            <person name="Wakebe H."/>
            <person name="Hishigaki H."/>
            <person name="Watanabe T."/>
            <person name="Sugiyama A."/>
            <person name="Takemoto M."/>
            <person name="Kawakami B."/>
            <person name="Yamazaki M."/>
            <person name="Watanabe K."/>
            <person name="Kumagai A."/>
            <person name="Itakura S."/>
            <person name="Fukuzumi Y."/>
            <person name="Fujimori Y."/>
            <person name="Komiyama M."/>
            <person name="Tashiro H."/>
            <person name="Tanigami A."/>
            <person name="Fujiwara T."/>
            <person name="Ono T."/>
            <person name="Yamada K."/>
            <person name="Fujii Y."/>
            <person name="Ozaki K."/>
            <person name="Hirao M."/>
            <person name="Ohmori Y."/>
            <person name="Kawabata A."/>
            <person name="Hikiji T."/>
            <person name="Kobatake N."/>
            <person name="Inagaki H."/>
            <person name="Ikema Y."/>
            <person name="Okamoto S."/>
            <person name="Okitani R."/>
            <person name="Kawakami T."/>
            <person name="Noguchi S."/>
            <person name="Itoh T."/>
            <person name="Shigeta K."/>
            <person name="Senba T."/>
            <person name="Matsumura K."/>
            <person name="Nakajima Y."/>
            <person name="Mizuno T."/>
            <person name="Morinaga M."/>
            <person name="Sasaki M."/>
            <person name="Togashi T."/>
            <person name="Oyama M."/>
            <person name="Hata H."/>
            <person name="Watanabe M."/>
            <person name="Komatsu T."/>
            <person name="Mizushima-Sugano J."/>
            <person name="Satoh T."/>
            <person name="Shirai Y."/>
            <person name="Takahashi Y."/>
            <person name="Nakagawa K."/>
            <person name="Okumura K."/>
            <person name="Nagase T."/>
            <person name="Nomura N."/>
            <person name="Kikuchi H."/>
            <person name="Masuho Y."/>
            <person name="Yamashita R."/>
            <person name="Nakai K."/>
            <person name="Yada T."/>
            <person name="Nakamura Y."/>
            <person name="Ohara O."/>
            <person name="Isogai T."/>
            <person name="Sugano S."/>
        </authorList>
    </citation>
    <scope>NUCLEOTIDE SEQUENCE [LARGE SCALE MRNA] (ISOFORM 1)</scope>
    <source>
        <tissue>Smooth muscle</tissue>
    </source>
</reference>
<reference key="2">
    <citation type="submission" date="2005-07" db="EMBL/GenBank/DDBJ databases">
        <authorList>
            <person name="Mural R.J."/>
            <person name="Istrail S."/>
            <person name="Sutton G.G."/>
            <person name="Florea L."/>
            <person name="Halpern A.L."/>
            <person name="Mobarry C.M."/>
            <person name="Lippert R."/>
            <person name="Walenz B."/>
            <person name="Shatkay H."/>
            <person name="Dew I."/>
            <person name="Miller J.R."/>
            <person name="Flanigan M.J."/>
            <person name="Edwards N.J."/>
            <person name="Bolanos R."/>
            <person name="Fasulo D."/>
            <person name="Halldorsson B.V."/>
            <person name="Hannenhalli S."/>
            <person name="Turner R."/>
            <person name="Yooseph S."/>
            <person name="Lu F."/>
            <person name="Nusskern D.R."/>
            <person name="Shue B.C."/>
            <person name="Zheng X.H."/>
            <person name="Zhong F."/>
            <person name="Delcher A.L."/>
            <person name="Huson D.H."/>
            <person name="Kravitz S.A."/>
            <person name="Mouchard L."/>
            <person name="Reinert K."/>
            <person name="Remington K.A."/>
            <person name="Clark A.G."/>
            <person name="Waterman M.S."/>
            <person name="Eichler E.E."/>
            <person name="Adams M.D."/>
            <person name="Hunkapiller M.W."/>
            <person name="Myers E.W."/>
            <person name="Venter J.C."/>
        </authorList>
    </citation>
    <scope>NUCLEOTIDE SEQUENCE [LARGE SCALE GENOMIC DNA]</scope>
</reference>
<reference key="3">
    <citation type="journal article" date="2004" name="Genome Res.">
        <title>The status, quality, and expansion of the NIH full-length cDNA project: the Mammalian Gene Collection (MGC).</title>
        <authorList>
            <consortium name="The MGC Project Team"/>
        </authorList>
    </citation>
    <scope>NUCLEOTIDE SEQUENCE [LARGE SCALE MRNA] (ISOFORMS 1 AND 2)</scope>
    <source>
        <tissue>Pancreas</tissue>
    </source>
</reference>
<reference key="4">
    <citation type="journal article" date="2004" name="Proc. Natl. Acad. Sci. U.S.A.">
        <title>Mammalian GLD-2 homologs are poly(A) polymerases.</title>
        <authorList>
            <person name="Kwak J.E."/>
            <person name="Wang L."/>
            <person name="Ballantyne S."/>
            <person name="Kimble J."/>
            <person name="Wickens M."/>
        </authorList>
    </citation>
    <scope>ENZYME ACTIVITY</scope>
</reference>
<reference key="5">
    <citation type="journal article" date="2005" name="RNA">
        <title>Vertebrate GLD2 poly(A) polymerases in the germline and the brain.</title>
        <authorList>
            <person name="Rouhana L."/>
            <person name="Wang L."/>
            <person name="Buter N."/>
            <person name="Kwak J.E."/>
            <person name="Schiltz C.A."/>
            <person name="Gonzalez T."/>
            <person name="Kelley A.E."/>
            <person name="Landry C.F."/>
            <person name="Wickens M."/>
        </authorList>
    </citation>
    <scope>TISSUE SPECIFICITY</scope>
</reference>
<reference key="6">
    <citation type="journal article" date="2008" name="Genes Dev.">
        <title>Degradation of histone mRNA requires oligouridylation followed by decapping and simultaneous degradation of the mRNA both 5' to 3' and 3' to 5'.</title>
        <authorList>
            <person name="Mullen T.E."/>
            <person name="Marzluff W.F."/>
        </authorList>
    </citation>
    <scope>ABSENCE OF FUNCTION IN HISTONE MRNA DEGRADATION ACTIVITY</scope>
</reference>
<reference key="7">
    <citation type="journal article" date="2009" name="Sci. Signal.">
        <title>Quantitative phosphoproteomic analysis of T cell receptor signaling reveals system-wide modulation of protein-protein interactions.</title>
        <authorList>
            <person name="Mayya V."/>
            <person name="Lundgren D.H."/>
            <person name="Hwang S.-I."/>
            <person name="Rezaul K."/>
            <person name="Wu L."/>
            <person name="Eng J.K."/>
            <person name="Rodionov V."/>
            <person name="Han D.K."/>
        </authorList>
    </citation>
    <scope>PHOSPHORYLATION [LARGE SCALE ANALYSIS] AT SER-69</scope>
    <scope>IDENTIFICATION BY MASS SPECTROMETRY [LARGE SCALE ANALYSIS]</scope>
    <source>
        <tissue>Leukemic T-cell</tissue>
    </source>
</reference>
<reference key="8">
    <citation type="journal article" date="2010" name="Sci. Signal.">
        <title>Quantitative phosphoproteomics reveals widespread full phosphorylation site occupancy during mitosis.</title>
        <authorList>
            <person name="Olsen J.V."/>
            <person name="Vermeulen M."/>
            <person name="Santamaria A."/>
            <person name="Kumar C."/>
            <person name="Miller M.L."/>
            <person name="Jensen L.J."/>
            <person name="Gnad F."/>
            <person name="Cox J."/>
            <person name="Jensen T.S."/>
            <person name="Nigg E.A."/>
            <person name="Brunak S."/>
            <person name="Mann M."/>
        </authorList>
    </citation>
    <scope>PHOSPHORYLATION [LARGE SCALE ANALYSIS] AT SER-62</scope>
    <scope>IDENTIFICATION BY MASS SPECTROMETRY [LARGE SCALE ANALYSIS]</scope>
    <source>
        <tissue>Cervix carcinoma</tissue>
    </source>
</reference>
<reference key="9">
    <citation type="journal article" date="2012" name="Cell Rep.">
        <title>Specific miRNA stabilization by Gld2-catalyzed monoadenylation.</title>
        <authorList>
            <person name="D'Ambrogio A."/>
            <person name="Gu W."/>
            <person name="Udagawa T."/>
            <person name="Mello C.C."/>
            <person name="Richter J.D."/>
        </authorList>
    </citation>
    <scope>FUNCTION</scope>
    <scope>MUTAGENESIS OF ASP-215</scope>
    <scope>CATALYTIC ACTIVITY</scope>
</reference>
<reference key="10">
    <citation type="journal article" date="2013" name="J. Proteome Res.">
        <title>Toward a comprehensive characterization of a human cancer cell phosphoproteome.</title>
        <authorList>
            <person name="Zhou H."/>
            <person name="Di Palma S."/>
            <person name="Preisinger C."/>
            <person name="Peng M."/>
            <person name="Polat A.N."/>
            <person name="Heck A.J."/>
            <person name="Mohammed S."/>
        </authorList>
    </citation>
    <scope>PHOSPHORYLATION [LARGE SCALE ANALYSIS] AT SER-95</scope>
    <scope>IDENTIFICATION BY MASS SPECTROMETRY [LARGE SCALE ANALYSIS]</scope>
    <source>
        <tissue>Cervix carcinoma</tissue>
        <tissue>Erythroleukemia</tissue>
    </source>
</reference>
<reference key="11">
    <citation type="journal article" date="2020" name="J. Biol. Chem.">
        <title>The RNA-binding protein QKI-7 recruits the poly(A) polymerase GLD-2 for 3' adenylation and selective stabilization of microRNA-122.</title>
        <authorList>
            <person name="Hojo H."/>
            <person name="Yashiro Y."/>
            <person name="Noda Y."/>
            <person name="Ogami K."/>
            <person name="Yamagishi R."/>
            <person name="Okada S."/>
            <person name="Hoshino S.I."/>
            <person name="Suzuki T."/>
        </authorList>
    </citation>
    <scope>FUNCTION</scope>
    <scope>INTERACTION WITH QKI</scope>
</reference>
<gene>
    <name evidence="12" type="primary">TENT2</name>
    <name evidence="12" type="synonym">GLD2</name>
    <name evidence="12" type="synonym">PAPD4</name>
</gene>
<name>GLD2_HUMAN</name>
<organism>
    <name type="scientific">Homo sapiens</name>
    <name type="common">Human</name>
    <dbReference type="NCBI Taxonomy" id="9606"/>
    <lineage>
        <taxon>Eukaryota</taxon>
        <taxon>Metazoa</taxon>
        <taxon>Chordata</taxon>
        <taxon>Craniata</taxon>
        <taxon>Vertebrata</taxon>
        <taxon>Euteleostomi</taxon>
        <taxon>Mammalia</taxon>
        <taxon>Eutheria</taxon>
        <taxon>Euarchontoglires</taxon>
        <taxon>Primates</taxon>
        <taxon>Haplorrhini</taxon>
        <taxon>Catarrhini</taxon>
        <taxon>Hominidae</taxon>
        <taxon>Homo</taxon>
    </lineage>
</organism>
<dbReference type="EC" id="2.7.7.19" evidence="5 8 9"/>
<dbReference type="EMBL" id="AK095818">
    <property type="protein sequence ID" value="BAC04629.1"/>
    <property type="molecule type" value="mRNA"/>
</dbReference>
<dbReference type="EMBL" id="CH471084">
    <property type="protein sequence ID" value="EAW95837.1"/>
    <property type="molecule type" value="Genomic_DNA"/>
</dbReference>
<dbReference type="EMBL" id="BC026061">
    <property type="protein sequence ID" value="AAH26061.1"/>
    <property type="molecule type" value="mRNA"/>
</dbReference>
<dbReference type="EMBL" id="BC047581">
    <property type="protein sequence ID" value="AAH47581.1"/>
    <property type="molecule type" value="mRNA"/>
</dbReference>
<dbReference type="CCDS" id="CCDS4048.1">
    <molecule id="Q6PIY7-1"/>
</dbReference>
<dbReference type="CCDS" id="CCDS75266.1">
    <molecule id="Q6PIY7-2"/>
</dbReference>
<dbReference type="RefSeq" id="NP_001107865.1">
    <molecule id="Q6PIY7-1"/>
    <property type="nucleotide sequence ID" value="NM_001114393.3"/>
</dbReference>
<dbReference type="RefSeq" id="NP_001107866.1">
    <molecule id="Q6PIY7-1"/>
    <property type="nucleotide sequence ID" value="NM_001114394.3"/>
</dbReference>
<dbReference type="RefSeq" id="NP_001284673.1">
    <molecule id="Q6PIY7-2"/>
    <property type="nucleotide sequence ID" value="NM_001297744.3"/>
</dbReference>
<dbReference type="RefSeq" id="NP_001336481.1">
    <molecule id="Q6PIY7-1"/>
    <property type="nucleotide sequence ID" value="NM_001349552.2"/>
</dbReference>
<dbReference type="RefSeq" id="NP_001336482.1">
    <molecule id="Q6PIY7-1"/>
    <property type="nucleotide sequence ID" value="NM_001349553.2"/>
</dbReference>
<dbReference type="RefSeq" id="NP_001336483.1">
    <molecule id="Q6PIY7-2"/>
    <property type="nucleotide sequence ID" value="NM_001349554.2"/>
</dbReference>
<dbReference type="RefSeq" id="NP_001375031.1">
    <molecule id="Q6PIY7-1"/>
    <property type="nucleotide sequence ID" value="NM_001388102.1"/>
</dbReference>
<dbReference type="RefSeq" id="NP_001375032.1">
    <molecule id="Q6PIY7-1"/>
    <property type="nucleotide sequence ID" value="NM_001388103.1"/>
</dbReference>
<dbReference type="RefSeq" id="NP_001375034.1">
    <molecule id="Q6PIY7-1"/>
    <property type="nucleotide sequence ID" value="NM_001388105.1"/>
</dbReference>
<dbReference type="RefSeq" id="NP_001375035.1">
    <molecule id="Q6PIY7-1"/>
    <property type="nucleotide sequence ID" value="NM_001388106.1"/>
</dbReference>
<dbReference type="RefSeq" id="NP_001375036.1">
    <molecule id="Q6PIY7-1"/>
    <property type="nucleotide sequence ID" value="NM_001388107.1"/>
</dbReference>
<dbReference type="RefSeq" id="NP_001375037.1">
    <molecule id="Q6PIY7-1"/>
    <property type="nucleotide sequence ID" value="NM_001388108.1"/>
</dbReference>
<dbReference type="RefSeq" id="NP_001375038.1">
    <molecule id="Q6PIY7-1"/>
    <property type="nucleotide sequence ID" value="NM_001388109.1"/>
</dbReference>
<dbReference type="RefSeq" id="NP_001375039.1">
    <molecule id="Q6PIY7-1"/>
    <property type="nucleotide sequence ID" value="NM_001388110.1"/>
</dbReference>
<dbReference type="RefSeq" id="NP_001375040.1">
    <molecule id="Q6PIY7-1"/>
    <property type="nucleotide sequence ID" value="NM_001388111.1"/>
</dbReference>
<dbReference type="RefSeq" id="NP_001375041.1">
    <molecule id="Q6PIY7-1"/>
    <property type="nucleotide sequence ID" value="NM_001388112.1"/>
</dbReference>
<dbReference type="RefSeq" id="NP_001375043.1">
    <molecule id="Q6PIY7-2"/>
    <property type="nucleotide sequence ID" value="NM_001388114.1"/>
</dbReference>
<dbReference type="RefSeq" id="NP_001375044.1">
    <molecule id="Q6PIY7-2"/>
    <property type="nucleotide sequence ID" value="NM_001388115.1"/>
</dbReference>
<dbReference type="RefSeq" id="NP_001375045.1">
    <molecule id="Q6PIY7-2"/>
    <property type="nucleotide sequence ID" value="NM_001388116.1"/>
</dbReference>
<dbReference type="RefSeq" id="NP_001375046.1">
    <molecule id="Q6PIY7-2"/>
    <property type="nucleotide sequence ID" value="NM_001388117.1"/>
</dbReference>
<dbReference type="RefSeq" id="NP_001375047.1">
    <molecule id="Q6PIY7-2"/>
    <property type="nucleotide sequence ID" value="NM_001388118.1"/>
</dbReference>
<dbReference type="RefSeq" id="NP_001375048.1">
    <molecule id="Q6PIY7-2"/>
    <property type="nucleotide sequence ID" value="NM_001388119.1"/>
</dbReference>
<dbReference type="RefSeq" id="NP_001375049.1">
    <molecule id="Q6PIY7-2"/>
    <property type="nucleotide sequence ID" value="NM_001388120.1"/>
</dbReference>
<dbReference type="RefSeq" id="NP_001375050.1">
    <molecule id="Q6PIY7-2"/>
    <property type="nucleotide sequence ID" value="NM_001388121.1"/>
</dbReference>
<dbReference type="RefSeq" id="NP_001375051.1">
    <molecule id="Q6PIY7-2"/>
    <property type="nucleotide sequence ID" value="NM_001388122.1"/>
</dbReference>
<dbReference type="RefSeq" id="NP_001375052.1">
    <molecule id="Q6PIY7-2"/>
    <property type="nucleotide sequence ID" value="NM_001388123.1"/>
</dbReference>
<dbReference type="RefSeq" id="NP_001375053.1">
    <molecule id="Q6PIY7-2"/>
    <property type="nucleotide sequence ID" value="NM_001388124.1"/>
</dbReference>
<dbReference type="RefSeq" id="NP_001375054.1">
    <molecule id="Q6PIY7-2"/>
    <property type="nucleotide sequence ID" value="NM_001388125.1"/>
</dbReference>
<dbReference type="RefSeq" id="NP_001375055.1">
    <molecule id="Q6PIY7-2"/>
    <property type="nucleotide sequence ID" value="NM_001388126.1"/>
</dbReference>
<dbReference type="RefSeq" id="NP_001375056.1">
    <molecule id="Q6PIY7-2"/>
    <property type="nucleotide sequence ID" value="NM_001388127.1"/>
</dbReference>
<dbReference type="RefSeq" id="NP_001375057.1">
    <molecule id="Q6PIY7-2"/>
    <property type="nucleotide sequence ID" value="NM_001388128.1"/>
</dbReference>
<dbReference type="RefSeq" id="NP_001375058.1">
    <molecule id="Q6PIY7-2"/>
    <property type="nucleotide sequence ID" value="NM_001388129.1"/>
</dbReference>
<dbReference type="RefSeq" id="NP_776158.2">
    <molecule id="Q6PIY7-1"/>
    <property type="nucleotide sequence ID" value="NM_173797.5"/>
</dbReference>
<dbReference type="RefSeq" id="XP_016864642.1">
    <property type="nucleotide sequence ID" value="XM_017009153.1"/>
</dbReference>
<dbReference type="RefSeq" id="XP_016864643.1">
    <property type="nucleotide sequence ID" value="XM_017009154.1"/>
</dbReference>
<dbReference type="RefSeq" id="XP_016864644.1">
    <property type="nucleotide sequence ID" value="XM_017009155.1"/>
</dbReference>
<dbReference type="RefSeq" id="XP_016864645.1">
    <property type="nucleotide sequence ID" value="XM_017009156.1"/>
</dbReference>
<dbReference type="RefSeq" id="XP_016864646.1">
    <property type="nucleotide sequence ID" value="XM_017009157.1"/>
</dbReference>
<dbReference type="RefSeq" id="XP_016864647.1">
    <property type="nucleotide sequence ID" value="XM_017009158.1"/>
</dbReference>
<dbReference type="RefSeq" id="XP_016864648.1">
    <property type="nucleotide sequence ID" value="XM_017009159.1"/>
</dbReference>
<dbReference type="RefSeq" id="XP_016864649.1">
    <property type="nucleotide sequence ID" value="XM_017009160.1"/>
</dbReference>
<dbReference type="RefSeq" id="XP_047272806.1">
    <molecule id="Q6PIY7-1"/>
    <property type="nucleotide sequence ID" value="XM_047416850.1"/>
</dbReference>
<dbReference type="RefSeq" id="XP_047272807.1">
    <molecule id="Q6PIY7-1"/>
    <property type="nucleotide sequence ID" value="XM_047416851.1"/>
</dbReference>
<dbReference type="RefSeq" id="XP_047272808.1">
    <molecule id="Q6PIY7-1"/>
    <property type="nucleotide sequence ID" value="XM_047416852.1"/>
</dbReference>
<dbReference type="RefSeq" id="XP_047272809.1">
    <molecule id="Q6PIY7-2"/>
    <property type="nucleotide sequence ID" value="XM_047416853.1"/>
</dbReference>
<dbReference type="RefSeq" id="XP_047272810.1">
    <molecule id="Q6PIY7-2"/>
    <property type="nucleotide sequence ID" value="XM_047416854.1"/>
</dbReference>
<dbReference type="RefSeq" id="XP_047272811.1">
    <molecule id="Q6PIY7-2"/>
    <property type="nucleotide sequence ID" value="XM_047416855.1"/>
</dbReference>
<dbReference type="RefSeq" id="XP_054207866.1">
    <molecule id="Q6PIY7-1"/>
    <property type="nucleotide sequence ID" value="XM_054351891.1"/>
</dbReference>
<dbReference type="RefSeq" id="XP_054207867.1">
    <molecule id="Q6PIY7-1"/>
    <property type="nucleotide sequence ID" value="XM_054351892.1"/>
</dbReference>
<dbReference type="RefSeq" id="XP_054207868.1">
    <molecule id="Q6PIY7-1"/>
    <property type="nucleotide sequence ID" value="XM_054351893.1"/>
</dbReference>
<dbReference type="RefSeq" id="XP_054207869.1">
    <molecule id="Q6PIY7-2"/>
    <property type="nucleotide sequence ID" value="XM_054351894.1"/>
</dbReference>
<dbReference type="RefSeq" id="XP_054207870.1">
    <molecule id="Q6PIY7-2"/>
    <property type="nucleotide sequence ID" value="XM_054351895.1"/>
</dbReference>
<dbReference type="RefSeq" id="XP_054207871.1">
    <molecule id="Q6PIY7-2"/>
    <property type="nucleotide sequence ID" value="XM_054351896.1"/>
</dbReference>
<dbReference type="SMR" id="Q6PIY7"/>
<dbReference type="BioGRID" id="127943">
    <property type="interactions" value="45"/>
</dbReference>
<dbReference type="FunCoup" id="Q6PIY7">
    <property type="interactions" value="2055"/>
</dbReference>
<dbReference type="IntAct" id="Q6PIY7">
    <property type="interactions" value="17"/>
</dbReference>
<dbReference type="MINT" id="Q6PIY7"/>
<dbReference type="STRING" id="9606.ENSP00000397563"/>
<dbReference type="iPTMnet" id="Q6PIY7"/>
<dbReference type="PhosphoSitePlus" id="Q6PIY7"/>
<dbReference type="BioMuta" id="PAPD4"/>
<dbReference type="DMDM" id="74737798"/>
<dbReference type="jPOST" id="Q6PIY7"/>
<dbReference type="MassIVE" id="Q6PIY7"/>
<dbReference type="PaxDb" id="9606-ENSP00000397563"/>
<dbReference type="PeptideAtlas" id="Q6PIY7"/>
<dbReference type="ProteomicsDB" id="67187">
    <molecule id="Q6PIY7-1"/>
</dbReference>
<dbReference type="ProteomicsDB" id="67188">
    <molecule id="Q6PIY7-2"/>
</dbReference>
<dbReference type="Pumba" id="Q6PIY7"/>
<dbReference type="Antibodypedia" id="24569">
    <property type="antibodies" value="102 antibodies from 20 providers"/>
</dbReference>
<dbReference type="DNASU" id="167153"/>
<dbReference type="Ensembl" id="ENST00000296783.7">
    <molecule id="Q6PIY7-1"/>
    <property type="protein sequence ID" value="ENSP00000296783.3"/>
    <property type="gene ID" value="ENSG00000164329.15"/>
</dbReference>
<dbReference type="Ensembl" id="ENST00000423041.6">
    <molecule id="Q6PIY7-2"/>
    <property type="protein sequence ID" value="ENSP00000393412.2"/>
    <property type="gene ID" value="ENSG00000164329.15"/>
</dbReference>
<dbReference type="Ensembl" id="ENST00000453514.6">
    <molecule id="Q6PIY7-1"/>
    <property type="protein sequence ID" value="ENSP00000397563.1"/>
    <property type="gene ID" value="ENSG00000164329.15"/>
</dbReference>
<dbReference type="GeneID" id="167153"/>
<dbReference type="KEGG" id="hsa:167153"/>
<dbReference type="MANE-Select" id="ENST00000453514.6">
    <property type="protein sequence ID" value="ENSP00000397563.1"/>
    <property type="RefSeq nucleotide sequence ID" value="NM_001114394.3"/>
    <property type="RefSeq protein sequence ID" value="NP_001107866.1"/>
</dbReference>
<dbReference type="UCSC" id="uc003kga.3">
    <molecule id="Q6PIY7-1"/>
    <property type="organism name" value="human"/>
</dbReference>
<dbReference type="AGR" id="HGNC:26776"/>
<dbReference type="CTD" id="167153"/>
<dbReference type="DisGeNET" id="167153"/>
<dbReference type="GeneCards" id="TENT2"/>
<dbReference type="HGNC" id="HGNC:26776">
    <property type="gene designation" value="TENT2"/>
</dbReference>
<dbReference type="HPA" id="ENSG00000164329">
    <property type="expression patterns" value="Low tissue specificity"/>
</dbReference>
<dbReference type="MIM" id="614121">
    <property type="type" value="gene"/>
</dbReference>
<dbReference type="neXtProt" id="NX_Q6PIY7"/>
<dbReference type="OpenTargets" id="ENSG00000164329"/>
<dbReference type="PharmGKB" id="PA134918975"/>
<dbReference type="VEuPathDB" id="HostDB:ENSG00000164329"/>
<dbReference type="eggNOG" id="KOG2277">
    <property type="taxonomic scope" value="Eukaryota"/>
</dbReference>
<dbReference type="GeneTree" id="ENSGT00940000156640"/>
<dbReference type="HOGENOM" id="CLU_046147_0_0_1"/>
<dbReference type="InParanoid" id="Q6PIY7"/>
<dbReference type="OMA" id="RTYAYAD"/>
<dbReference type="OrthoDB" id="2274644at2759"/>
<dbReference type="PAN-GO" id="Q6PIY7">
    <property type="GO annotations" value="3 GO annotations based on evolutionary models"/>
</dbReference>
<dbReference type="PhylomeDB" id="Q6PIY7"/>
<dbReference type="TreeFam" id="TF315661"/>
<dbReference type="BRENDA" id="2.7.7.19">
    <property type="organism ID" value="2681"/>
</dbReference>
<dbReference type="PathwayCommons" id="Q6PIY7"/>
<dbReference type="SignaLink" id="Q6PIY7"/>
<dbReference type="SIGNOR" id="Q6PIY7"/>
<dbReference type="BioGRID-ORCS" id="167153">
    <property type="hits" value="13 hits in 1153 CRISPR screens"/>
</dbReference>
<dbReference type="ChiTaRS" id="TENT2">
    <property type="organism name" value="human"/>
</dbReference>
<dbReference type="GenomeRNAi" id="167153"/>
<dbReference type="Pharos" id="Q6PIY7">
    <property type="development level" value="Tbio"/>
</dbReference>
<dbReference type="PRO" id="PR:Q6PIY7"/>
<dbReference type="Proteomes" id="UP000005640">
    <property type="component" value="Chromosome 5"/>
</dbReference>
<dbReference type="RNAct" id="Q6PIY7">
    <property type="molecule type" value="protein"/>
</dbReference>
<dbReference type="Bgee" id="ENSG00000164329">
    <property type="expression patterns" value="Expressed in calcaneal tendon and 183 other cell types or tissues"/>
</dbReference>
<dbReference type="ExpressionAtlas" id="Q6PIY7">
    <property type="expression patterns" value="baseline and differential"/>
</dbReference>
<dbReference type="GO" id="GO:0005737">
    <property type="term" value="C:cytoplasm"/>
    <property type="evidence" value="ECO:0007669"/>
    <property type="project" value="UniProtKB-SubCell"/>
</dbReference>
<dbReference type="GO" id="GO:0031380">
    <property type="term" value="C:nuclear RNA-directed RNA polymerase complex"/>
    <property type="evidence" value="ECO:0000305"/>
    <property type="project" value="UniProtKB"/>
</dbReference>
<dbReference type="GO" id="GO:0005524">
    <property type="term" value="F:ATP binding"/>
    <property type="evidence" value="ECO:0007669"/>
    <property type="project" value="UniProtKB-KW"/>
</dbReference>
<dbReference type="GO" id="GO:0046872">
    <property type="term" value="F:metal ion binding"/>
    <property type="evidence" value="ECO:0007669"/>
    <property type="project" value="UniProtKB-KW"/>
</dbReference>
<dbReference type="GO" id="GO:1990817">
    <property type="term" value="F:poly(A) RNA polymerase activity"/>
    <property type="evidence" value="ECO:0000314"/>
    <property type="project" value="UniProtKB"/>
</dbReference>
<dbReference type="GO" id="GO:0002244">
    <property type="term" value="P:hematopoietic progenitor cell differentiation"/>
    <property type="evidence" value="ECO:0007669"/>
    <property type="project" value="Ensembl"/>
</dbReference>
<dbReference type="GO" id="GO:0071044">
    <property type="term" value="P:histone mRNA catabolic process"/>
    <property type="evidence" value="ECO:0000315"/>
    <property type="project" value="UniProtKB"/>
</dbReference>
<dbReference type="GO" id="GO:0031124">
    <property type="term" value="P:mRNA 3'-end processing"/>
    <property type="evidence" value="ECO:0000314"/>
    <property type="project" value="UniProtKB"/>
</dbReference>
<dbReference type="GO" id="GO:2000626">
    <property type="term" value="P:negative regulation of miRNA catabolic process"/>
    <property type="evidence" value="ECO:0000314"/>
    <property type="project" value="UniProtKB"/>
</dbReference>
<dbReference type="GO" id="GO:0031123">
    <property type="term" value="P:RNA 3'-end processing"/>
    <property type="evidence" value="ECO:0000318"/>
    <property type="project" value="GO_Central"/>
</dbReference>
<dbReference type="GO" id="GO:0140958">
    <property type="term" value="P:target-directed miRNA degradation"/>
    <property type="evidence" value="ECO:0007669"/>
    <property type="project" value="Ensembl"/>
</dbReference>
<dbReference type="CDD" id="cd05402">
    <property type="entry name" value="NT_PAP_TUTase"/>
    <property type="match status" value="1"/>
</dbReference>
<dbReference type="FunFam" id="1.10.1410.10:FF:000007">
    <property type="entry name" value="poly(A) RNA polymerase GLD2 isoform X1"/>
    <property type="match status" value="1"/>
</dbReference>
<dbReference type="FunFam" id="3.30.460.10:FF:000022">
    <property type="entry name" value="poly(A) RNA polymerase GLD2 isoform X1"/>
    <property type="match status" value="1"/>
</dbReference>
<dbReference type="Gene3D" id="1.10.1410.10">
    <property type="match status" value="1"/>
</dbReference>
<dbReference type="Gene3D" id="3.30.460.10">
    <property type="entry name" value="Beta Polymerase, domain 2"/>
    <property type="match status" value="1"/>
</dbReference>
<dbReference type="InterPro" id="IPR054708">
    <property type="entry name" value="MTPAP-like_central"/>
</dbReference>
<dbReference type="InterPro" id="IPR043519">
    <property type="entry name" value="NT_sf"/>
</dbReference>
<dbReference type="InterPro" id="IPR002058">
    <property type="entry name" value="PAP_assoc"/>
</dbReference>
<dbReference type="PANTHER" id="PTHR12271">
    <property type="entry name" value="POLY A POLYMERASE CID PAP -RELATED"/>
    <property type="match status" value="1"/>
</dbReference>
<dbReference type="PANTHER" id="PTHR12271:SF40">
    <property type="entry name" value="POLY(A) RNA POLYMERASE GLD2"/>
    <property type="match status" value="1"/>
</dbReference>
<dbReference type="Pfam" id="PF22600">
    <property type="entry name" value="MTPAP-like_central"/>
    <property type="match status" value="1"/>
</dbReference>
<dbReference type="Pfam" id="PF03828">
    <property type="entry name" value="PAP_assoc"/>
    <property type="match status" value="1"/>
</dbReference>
<dbReference type="SUPFAM" id="SSF81301">
    <property type="entry name" value="Nucleotidyltransferase"/>
    <property type="match status" value="1"/>
</dbReference>
<dbReference type="SUPFAM" id="SSF81631">
    <property type="entry name" value="PAP/OAS1 substrate-binding domain"/>
    <property type="match status" value="1"/>
</dbReference>
<keyword id="KW-0025">Alternative splicing</keyword>
<keyword id="KW-0067">ATP-binding</keyword>
<keyword id="KW-0963">Cytoplasm</keyword>
<keyword id="KW-0460">Magnesium</keyword>
<keyword id="KW-0464">Manganese</keyword>
<keyword id="KW-0479">Metal-binding</keyword>
<keyword id="KW-0507">mRNA processing</keyword>
<keyword id="KW-0547">Nucleotide-binding</keyword>
<keyword id="KW-0539">Nucleus</keyword>
<keyword id="KW-0597">Phosphoprotein</keyword>
<keyword id="KW-1267">Proteomics identification</keyword>
<keyword id="KW-1185">Reference proteome</keyword>
<keyword id="KW-0808">Transferase</keyword>
<protein>
    <recommendedName>
        <fullName evidence="11">Poly(A) RNA polymerase GLD2</fullName>
        <shortName evidence="11">hGLD-2</shortName>
        <ecNumber evidence="5 8 9">2.7.7.19</ecNumber>
    </recommendedName>
    <alternativeName>
        <fullName>PAP-associated domain-containing protein 4</fullName>
    </alternativeName>
    <alternativeName>
        <fullName evidence="12">Terminal nucleotidyltransferase 2</fullName>
    </alternativeName>
    <alternativeName>
        <fullName>Terminal uridylyltransferase 2</fullName>
        <shortName>TUTase 2</shortName>
    </alternativeName>
</protein>
<proteinExistence type="evidence at protein level"/>
<feature type="chain" id="PRO_0000341549" description="Poly(A) RNA polymerase GLD2">
    <location>
        <begin position="1"/>
        <end position="484"/>
    </location>
</feature>
<feature type="domain" description="PAP-associated">
    <location>
        <begin position="386"/>
        <end position="440"/>
    </location>
</feature>
<feature type="region of interest" description="Disordered" evidence="4">
    <location>
        <begin position="72"/>
        <end position="97"/>
    </location>
</feature>
<feature type="short sequence motif" description="Nuclear localization signal" evidence="3">
    <location>
        <begin position="76"/>
        <end position="92"/>
    </location>
</feature>
<feature type="compositionally biased region" description="Basic and acidic residues" evidence="4">
    <location>
        <begin position="77"/>
        <end position="90"/>
    </location>
</feature>
<feature type="binding site" evidence="1">
    <location>
        <position position="213"/>
    </location>
    <ligand>
        <name>Mg(2+)</name>
        <dbReference type="ChEBI" id="CHEBI:18420"/>
        <note>catalytic</note>
    </ligand>
</feature>
<feature type="binding site" evidence="1">
    <location>
        <position position="215"/>
    </location>
    <ligand>
        <name>Mg(2+)</name>
        <dbReference type="ChEBI" id="CHEBI:18420"/>
        <note>catalytic</note>
    </ligand>
</feature>
<feature type="modified residue" description="Phosphoserine" evidence="14">
    <location>
        <position position="62"/>
    </location>
</feature>
<feature type="modified residue" description="Phosphoserine" evidence="13">
    <location>
        <position position="69"/>
    </location>
</feature>
<feature type="modified residue" description="Phosphoserine" evidence="15">
    <location>
        <position position="95"/>
    </location>
</feature>
<feature type="splice variant" id="VSP_034324" description="In isoform 2." evidence="10">
    <location>
        <begin position="225"/>
        <end position="228"/>
    </location>
</feature>
<feature type="mutagenesis site" description="Catalytically inactive." evidence="8">
    <original>D</original>
    <variation>A</variation>
    <location>
        <position position="215"/>
    </location>
</feature>
<feature type="sequence conflict" description="In Ref. 1; BAC04629." evidence="11" ref="1">
    <original>R</original>
    <variation>H</variation>
    <location>
        <position position="9"/>
    </location>
</feature>
<sequence length="484" mass="56028">MFPNSILGRPPFTPNHQQHNNFFTLSPTVYSHQQLIDAQFNFQNADLSRAVSLQQLTYGNVSPIQTSASPLFRGRKRLSDEKNLPLDGKRQRFHSPHQEPTVVNQIVPLSGERRYSMPPLFHTHYVPDIVRCVPPFREIAFLEPREITLPEAKDKLSQQILELFETCQQQISDLKKKELCRTQLQREIQLLFPQSRLFLVGSSLNGFGTRSSDGDLCLVVKEEPCFFQVNQKTEARHILTLVHKHFCTRLSGYIERPQLIRAKVPIVKFRDKVSCVEFDLNVNNIVGIRNTFLLRTYAYLENRVRPLVLVIKKWASHHQINDASRGTLSSYSLVLMVLHYLQTLPEPILPSLQKIYPESFSPAIQLHLVHQAPCNVPPYLSKNESNLGDLLLGFLKYYATEFDWNSQMISVREAKAIPRPDGIEWRNKYICVEEPFDGTNTARAVHEKQKFDMIKDQFLKSWHRLKNKRDLNSILPVRAAVLKR</sequence>
<evidence type="ECO:0000250" key="1">
    <source>
        <dbReference type="UniProtKB" id="O13833"/>
    </source>
</evidence>
<evidence type="ECO:0000250" key="2">
    <source>
        <dbReference type="UniProtKB" id="Q91YI6"/>
    </source>
</evidence>
<evidence type="ECO:0000255" key="3"/>
<evidence type="ECO:0000256" key="4">
    <source>
        <dbReference type="SAM" id="MobiDB-lite"/>
    </source>
</evidence>
<evidence type="ECO:0000269" key="5">
    <source>
    </source>
</evidence>
<evidence type="ECO:0000269" key="6">
    <source>
    </source>
</evidence>
<evidence type="ECO:0000269" key="7">
    <source>
    </source>
</evidence>
<evidence type="ECO:0000269" key="8">
    <source>
    </source>
</evidence>
<evidence type="ECO:0000269" key="9">
    <source>
    </source>
</evidence>
<evidence type="ECO:0000303" key="10">
    <source>
    </source>
</evidence>
<evidence type="ECO:0000305" key="11"/>
<evidence type="ECO:0000312" key="12">
    <source>
        <dbReference type="HGNC" id="HGNC:26776"/>
    </source>
</evidence>
<evidence type="ECO:0007744" key="13">
    <source>
    </source>
</evidence>
<evidence type="ECO:0007744" key="14">
    <source>
    </source>
</evidence>
<evidence type="ECO:0007744" key="15">
    <source>
    </source>
</evidence>
<comment type="function">
    <text evidence="5 7 8 9">Cytoplasmic poly(A) RNA polymerase that adds successive AMP monomers to the 3'-end of specific RNAs, forming a poly(A) tail (PubMed:15070731, PubMed:31792053). In contrast to the canonical nuclear poly(A) RNA polymerase, it only adds poly(A) to selected cytoplasmic mRNAs (PubMed:15070731). Does not play a role in replication-dependent histone mRNA degradation (PubMed:18172165). Adds a single nucleotide to the 3' end of specific miRNAs, monoadenylation stabilizes and prolongs the activity of some but not all miRNAs (PubMed:23200856, PubMed:31792053).</text>
</comment>
<comment type="catalytic activity">
    <reaction evidence="5 8 9">
        <text>RNA(n) + ATP = RNA(n)-3'-adenine ribonucleotide + diphosphate</text>
        <dbReference type="Rhea" id="RHEA:11332"/>
        <dbReference type="Rhea" id="RHEA-COMP:14527"/>
        <dbReference type="Rhea" id="RHEA-COMP:17347"/>
        <dbReference type="ChEBI" id="CHEBI:30616"/>
        <dbReference type="ChEBI" id="CHEBI:33019"/>
        <dbReference type="ChEBI" id="CHEBI:140395"/>
        <dbReference type="ChEBI" id="CHEBI:173115"/>
        <dbReference type="EC" id="2.7.7.19"/>
    </reaction>
</comment>
<comment type="cofactor">
    <cofactor evidence="1">
        <name>Mg(2+)</name>
        <dbReference type="ChEBI" id="CHEBI:18420"/>
    </cofactor>
    <cofactor evidence="1">
        <name>Mn(2+)</name>
        <dbReference type="ChEBI" id="CHEBI:29035"/>
    </cofactor>
</comment>
<comment type="subunit">
    <text evidence="2 9">Interacts with CPEB1, CPEB2, CPSF1 and PABPC1 (By similarity). Interacts with QKI isoform QKI7; promoting recruitment to miRNA miR-122 and miR-122 stabilization (PubMed:31792053).</text>
</comment>
<comment type="interaction">
    <interactant intactId="EBI-2802204">
        <id>Q6PIY7</id>
    </interactant>
    <interactant intactId="EBI-10179719">
        <id>A2RRN7</id>
        <label>CADPS</label>
    </interactant>
    <organismsDiffer>false</organismsDiffer>
    <experiments>3</experiments>
</comment>
<comment type="interaction">
    <interactant intactId="EBI-2802204">
        <id>Q6PIY7</id>
    </interactant>
    <interactant intactId="EBI-739580">
        <id>Q13137</id>
        <label>CALCOCO2</label>
    </interactant>
    <organismsDiffer>false</organismsDiffer>
    <experiments>3</experiments>
</comment>
<comment type="interaction">
    <interactant intactId="EBI-2802204">
        <id>Q6PIY7</id>
    </interactant>
    <interactant intactId="EBI-740376">
        <id>Q86UW9</id>
        <label>DTX2</label>
    </interactant>
    <organismsDiffer>false</organismsDiffer>
    <experiments>3</experiments>
</comment>
<comment type="interaction">
    <interactant intactId="EBI-2802204">
        <id>Q6PIY7</id>
    </interactant>
    <interactant intactId="EBI-22311199">
        <id>Q3LI67</id>
        <label>KRTAP6-3</label>
    </interactant>
    <organismsDiffer>false</organismsDiffer>
    <experiments>3</experiments>
</comment>
<comment type="interaction">
    <interactant intactId="EBI-2802204">
        <id>Q6PIY7</id>
    </interactant>
    <interactant intactId="EBI-740322">
        <id>Q93062</id>
        <label>RBPMS</label>
    </interactant>
    <organismsDiffer>false</organismsDiffer>
    <experiments>3</experiments>
</comment>
<comment type="subcellular location">
    <subcellularLocation>
        <location evidence="2">Cytoplasm</location>
    </subcellularLocation>
    <subcellularLocation>
        <location evidence="2">Nucleus</location>
    </subcellularLocation>
</comment>
<comment type="alternative products">
    <event type="alternative splicing"/>
    <isoform>
        <id>Q6PIY7-1</id>
        <name>1</name>
        <sequence type="displayed"/>
    </isoform>
    <isoform>
        <id>Q6PIY7-2</id>
        <name>2</name>
        <sequence type="described" ref="VSP_034324"/>
    </isoform>
</comment>
<comment type="tissue specificity">
    <text evidence="6">Expressed in brain. Within brain, it is expressed in cerebellum, hippocampus and medulla.</text>
</comment>
<comment type="similarity">
    <text evidence="11">Belongs to the DNA polymerase type-B-like family. GLD2 subfamily.</text>
</comment>